<dbReference type="EMBL" id="L77117">
    <property type="protein sequence ID" value="AAB98525.1"/>
    <property type="molecule type" value="Genomic_DNA"/>
</dbReference>
<dbReference type="PIR" id="F64366">
    <property type="entry name" value="F64366"/>
</dbReference>
<dbReference type="SMR" id="Q57954"/>
<dbReference type="FunCoup" id="Q57954">
    <property type="interactions" value="3"/>
</dbReference>
<dbReference type="STRING" id="243232.MJ_0534"/>
<dbReference type="PaxDb" id="243232-MJ_0534"/>
<dbReference type="EnsemblBacteria" id="AAB98525">
    <property type="protein sequence ID" value="AAB98525"/>
    <property type="gene ID" value="MJ_0534"/>
</dbReference>
<dbReference type="KEGG" id="mja:MJ_0534"/>
<dbReference type="eggNOG" id="arCOG00509">
    <property type="taxonomic scope" value="Archaea"/>
</dbReference>
<dbReference type="HOGENOM" id="CLU_017490_0_0_2"/>
<dbReference type="InParanoid" id="Q57954"/>
<dbReference type="PhylomeDB" id="Q57954"/>
<dbReference type="Proteomes" id="UP000000805">
    <property type="component" value="Chromosome"/>
</dbReference>
<dbReference type="GO" id="GO:0009055">
    <property type="term" value="F:electron transfer activity"/>
    <property type="evidence" value="ECO:0007669"/>
    <property type="project" value="InterPro"/>
</dbReference>
<dbReference type="GO" id="GO:0010181">
    <property type="term" value="F:FMN binding"/>
    <property type="evidence" value="ECO:0007669"/>
    <property type="project" value="InterPro"/>
</dbReference>
<dbReference type="GO" id="GO:0046872">
    <property type="term" value="F:metal ion binding"/>
    <property type="evidence" value="ECO:0007669"/>
    <property type="project" value="InterPro"/>
</dbReference>
<dbReference type="GO" id="GO:0016491">
    <property type="term" value="F:oxidoreductase activity"/>
    <property type="evidence" value="ECO:0000318"/>
    <property type="project" value="GO_Central"/>
</dbReference>
<dbReference type="CDD" id="cd07709">
    <property type="entry name" value="flavodiiron_proteins_MBL-fold"/>
    <property type="match status" value="1"/>
</dbReference>
<dbReference type="Gene3D" id="3.40.50.360">
    <property type="match status" value="1"/>
</dbReference>
<dbReference type="Gene3D" id="3.60.15.10">
    <property type="entry name" value="Ribonuclease Z/Hydroxyacylglutathione hydrolase-like"/>
    <property type="match status" value="1"/>
</dbReference>
<dbReference type="InterPro" id="IPR008254">
    <property type="entry name" value="Flavodoxin/NO_synth"/>
</dbReference>
<dbReference type="InterPro" id="IPR029039">
    <property type="entry name" value="Flavoprotein-like_sf"/>
</dbReference>
<dbReference type="InterPro" id="IPR001279">
    <property type="entry name" value="Metallo-B-lactamas"/>
</dbReference>
<dbReference type="InterPro" id="IPR045761">
    <property type="entry name" value="ODP_dom"/>
</dbReference>
<dbReference type="InterPro" id="IPR036866">
    <property type="entry name" value="RibonucZ/Hydroxyglut_hydro"/>
</dbReference>
<dbReference type="InterPro" id="IPR016440">
    <property type="entry name" value="Rubredoxin-O_OxRdtase"/>
</dbReference>
<dbReference type="PANTHER" id="PTHR43717">
    <property type="entry name" value="ANAEROBIC NITRIC OXIDE REDUCTASE FLAVORUBREDOXIN"/>
    <property type="match status" value="1"/>
</dbReference>
<dbReference type="PANTHER" id="PTHR43717:SF1">
    <property type="entry name" value="ANAEROBIC NITRIC OXIDE REDUCTASE FLAVORUBREDOXIN"/>
    <property type="match status" value="1"/>
</dbReference>
<dbReference type="Pfam" id="PF00258">
    <property type="entry name" value="Flavodoxin_1"/>
    <property type="match status" value="1"/>
</dbReference>
<dbReference type="Pfam" id="PF19583">
    <property type="entry name" value="ODP"/>
    <property type="match status" value="1"/>
</dbReference>
<dbReference type="PIRSF" id="PIRSF005243">
    <property type="entry name" value="ROO"/>
    <property type="match status" value="1"/>
</dbReference>
<dbReference type="SMART" id="SM00849">
    <property type="entry name" value="Lactamase_B"/>
    <property type="match status" value="1"/>
</dbReference>
<dbReference type="SUPFAM" id="SSF52218">
    <property type="entry name" value="Flavoproteins"/>
    <property type="match status" value="1"/>
</dbReference>
<dbReference type="SUPFAM" id="SSF56281">
    <property type="entry name" value="Metallo-hydrolase/oxidoreductase"/>
    <property type="match status" value="1"/>
</dbReference>
<dbReference type="PROSITE" id="PS50902">
    <property type="entry name" value="FLAVODOXIN_LIKE"/>
    <property type="match status" value="1"/>
</dbReference>
<sequence>MVKYMVLKIKDNIYCMSFIEWKIKEYRGLDIEKGTTYNSYLILDKNNVIIDTTRIKYFDELLSYLKDVANLKLDYIISNHISPDHNECIEKLIELTEAKIVTTKIRKYYLDAQFNTKDWEFVIVKNGDELNIGNRTLKFITDDKCEYMLTYCVEDKILFSNDLFSQHVVYKEKIDSDIGHKIMLDAKEYFANILLPYRKSILKILNILKDLDLEYICPSHGVIWHIMIDEILTKYRMWCSDSYKNTAVIVYATIYSSTEKIAKALGEGLSEEGVDVIYHRLDTSPLNIIMRDILDAKYVLVGSPTINMNVHPKVGMLLTYIEGLKPSNKKIGVAFGSYGWKECATKKIIEAFKRLGFKIVDDKILTFRFAPKENDIKKIKEFGRKLAKINV</sequence>
<keyword id="KW-1185">Reference proteome</keyword>
<protein>
    <recommendedName>
        <fullName>Uncharacterized protein MJ0534</fullName>
    </recommendedName>
</protein>
<evidence type="ECO:0000255" key="1">
    <source>
        <dbReference type="PROSITE-ProRule" id="PRU00088"/>
    </source>
</evidence>
<gene>
    <name type="ordered locus">MJ0534</name>
</gene>
<organism>
    <name type="scientific">Methanocaldococcus jannaschii (strain ATCC 43067 / DSM 2661 / JAL-1 / JCM 10045 / NBRC 100440)</name>
    <name type="common">Methanococcus jannaschii</name>
    <dbReference type="NCBI Taxonomy" id="243232"/>
    <lineage>
        <taxon>Archaea</taxon>
        <taxon>Methanobacteriati</taxon>
        <taxon>Methanobacteriota</taxon>
        <taxon>Methanomada group</taxon>
        <taxon>Methanococci</taxon>
        <taxon>Methanococcales</taxon>
        <taxon>Methanocaldococcaceae</taxon>
        <taxon>Methanocaldococcus</taxon>
    </lineage>
</organism>
<name>Y534_METJA</name>
<feature type="chain" id="PRO_0000106919" description="Uncharacterized protein MJ0534">
    <location>
        <begin position="1"/>
        <end position="391"/>
    </location>
</feature>
<feature type="domain" description="Flavodoxin-like" evidence="1">
    <location>
        <begin position="247"/>
        <end position="387"/>
    </location>
</feature>
<proteinExistence type="predicted"/>
<accession>Q57954</accession>
<reference key="1">
    <citation type="journal article" date="1996" name="Science">
        <title>Complete genome sequence of the methanogenic archaeon, Methanococcus jannaschii.</title>
        <authorList>
            <person name="Bult C.J."/>
            <person name="White O."/>
            <person name="Olsen G.J."/>
            <person name="Zhou L."/>
            <person name="Fleischmann R.D."/>
            <person name="Sutton G.G."/>
            <person name="Blake J.A."/>
            <person name="FitzGerald L.M."/>
            <person name="Clayton R.A."/>
            <person name="Gocayne J.D."/>
            <person name="Kerlavage A.R."/>
            <person name="Dougherty B.A."/>
            <person name="Tomb J.-F."/>
            <person name="Adams M.D."/>
            <person name="Reich C.I."/>
            <person name="Overbeek R."/>
            <person name="Kirkness E.F."/>
            <person name="Weinstock K.G."/>
            <person name="Merrick J.M."/>
            <person name="Glodek A."/>
            <person name="Scott J.L."/>
            <person name="Geoghagen N.S.M."/>
            <person name="Weidman J.F."/>
            <person name="Fuhrmann J.L."/>
            <person name="Nguyen D."/>
            <person name="Utterback T.R."/>
            <person name="Kelley J.M."/>
            <person name="Peterson J.D."/>
            <person name="Sadow P.W."/>
            <person name="Hanna M.C."/>
            <person name="Cotton M.D."/>
            <person name="Roberts K.M."/>
            <person name="Hurst M.A."/>
            <person name="Kaine B.P."/>
            <person name="Borodovsky M."/>
            <person name="Klenk H.-P."/>
            <person name="Fraser C.M."/>
            <person name="Smith H.O."/>
            <person name="Woese C.R."/>
            <person name="Venter J.C."/>
        </authorList>
    </citation>
    <scope>NUCLEOTIDE SEQUENCE [LARGE SCALE GENOMIC DNA]</scope>
    <source>
        <strain>ATCC 43067 / DSM 2661 / JAL-1 / JCM 10045 / NBRC 100440</strain>
    </source>
</reference>